<dbReference type="EMBL" id="CP000720">
    <property type="protein sequence ID" value="ABS47161.1"/>
    <property type="molecule type" value="Genomic_DNA"/>
</dbReference>
<dbReference type="RefSeq" id="WP_002209390.1">
    <property type="nucleotide sequence ID" value="NC_009708.1"/>
</dbReference>
<dbReference type="SMR" id="A7FLX9"/>
<dbReference type="GeneID" id="57975347"/>
<dbReference type="KEGG" id="ypi:YpsIP31758_3300"/>
<dbReference type="HOGENOM" id="CLU_134863_5_2_6"/>
<dbReference type="Proteomes" id="UP000002412">
    <property type="component" value="Chromosome"/>
</dbReference>
<dbReference type="GO" id="GO:0032153">
    <property type="term" value="C:cell division site"/>
    <property type="evidence" value="ECO:0007669"/>
    <property type="project" value="UniProtKB-UniRule"/>
</dbReference>
<dbReference type="GO" id="GO:0030428">
    <property type="term" value="C:cell septum"/>
    <property type="evidence" value="ECO:0007669"/>
    <property type="project" value="TreeGrafter"/>
</dbReference>
<dbReference type="GO" id="GO:0005886">
    <property type="term" value="C:plasma membrane"/>
    <property type="evidence" value="ECO:0007669"/>
    <property type="project" value="UniProtKB-SubCell"/>
</dbReference>
<dbReference type="GO" id="GO:0043093">
    <property type="term" value="P:FtsZ-dependent cytokinesis"/>
    <property type="evidence" value="ECO:0007669"/>
    <property type="project" value="UniProtKB-UniRule"/>
</dbReference>
<dbReference type="Gene3D" id="1.20.5.400">
    <property type="match status" value="1"/>
</dbReference>
<dbReference type="HAMAP" id="MF_00599">
    <property type="entry name" value="FtsB"/>
    <property type="match status" value="1"/>
</dbReference>
<dbReference type="InterPro" id="IPR023081">
    <property type="entry name" value="Cell_div_FtsB"/>
</dbReference>
<dbReference type="InterPro" id="IPR007060">
    <property type="entry name" value="FtsL/DivIC"/>
</dbReference>
<dbReference type="NCBIfam" id="NF002058">
    <property type="entry name" value="PRK00888.1"/>
    <property type="match status" value="1"/>
</dbReference>
<dbReference type="PANTHER" id="PTHR37485">
    <property type="entry name" value="CELL DIVISION PROTEIN FTSB"/>
    <property type="match status" value="1"/>
</dbReference>
<dbReference type="PANTHER" id="PTHR37485:SF1">
    <property type="entry name" value="CELL DIVISION PROTEIN FTSB"/>
    <property type="match status" value="1"/>
</dbReference>
<dbReference type="Pfam" id="PF04977">
    <property type="entry name" value="DivIC"/>
    <property type="match status" value="1"/>
</dbReference>
<name>FTSB_YERP3</name>
<protein>
    <recommendedName>
        <fullName evidence="1">Cell division protein FtsB</fullName>
    </recommendedName>
</protein>
<evidence type="ECO:0000255" key="1">
    <source>
        <dbReference type="HAMAP-Rule" id="MF_00599"/>
    </source>
</evidence>
<sequence length="106" mass="11869">MGKLTLLLLVLLGWLQYSLWLGKNGIHDFVRVKEDVAAQEANNSTLKARNDQLFAEIDDLNGGQEAIEERARNELGMIKPGESFYRLVPDQSRRNAGTPSTQNNAQ</sequence>
<proteinExistence type="inferred from homology"/>
<comment type="function">
    <text evidence="1">Essential cell division protein. May link together the upstream cell division proteins, which are predominantly cytoplasmic, with the downstream cell division proteins, which are predominantly periplasmic.</text>
</comment>
<comment type="subunit">
    <text evidence="1">Part of a complex composed of FtsB, FtsL and FtsQ.</text>
</comment>
<comment type="subcellular location">
    <subcellularLocation>
        <location evidence="1">Cell inner membrane</location>
        <topology evidence="1">Single-pass type II membrane protein</topology>
    </subcellularLocation>
    <text evidence="1">Localizes to the division septum.</text>
</comment>
<comment type="similarity">
    <text evidence="1">Belongs to the FtsB family.</text>
</comment>
<keyword id="KW-0131">Cell cycle</keyword>
<keyword id="KW-0132">Cell division</keyword>
<keyword id="KW-0997">Cell inner membrane</keyword>
<keyword id="KW-1003">Cell membrane</keyword>
<keyword id="KW-0175">Coiled coil</keyword>
<keyword id="KW-0472">Membrane</keyword>
<keyword id="KW-0812">Transmembrane</keyword>
<keyword id="KW-1133">Transmembrane helix</keyword>
<feature type="chain" id="PRO_1000061249" description="Cell division protein FtsB">
    <location>
        <begin position="1"/>
        <end position="106"/>
    </location>
</feature>
<feature type="topological domain" description="Cytoplasmic" evidence="1">
    <location>
        <begin position="1"/>
        <end position="3"/>
    </location>
</feature>
<feature type="transmembrane region" description="Helical" evidence="1">
    <location>
        <begin position="4"/>
        <end position="21"/>
    </location>
</feature>
<feature type="topological domain" description="Periplasmic" evidence="1">
    <location>
        <begin position="22"/>
        <end position="106"/>
    </location>
</feature>
<feature type="coiled-coil region" evidence="1">
    <location>
        <begin position="31"/>
        <end position="62"/>
    </location>
</feature>
<reference key="1">
    <citation type="journal article" date="2007" name="PLoS Genet.">
        <title>The complete genome sequence of Yersinia pseudotuberculosis IP31758, the causative agent of Far East scarlet-like fever.</title>
        <authorList>
            <person name="Eppinger M."/>
            <person name="Rosovitz M.J."/>
            <person name="Fricke W.F."/>
            <person name="Rasko D.A."/>
            <person name="Kokorina G."/>
            <person name="Fayolle C."/>
            <person name="Lindler L.E."/>
            <person name="Carniel E."/>
            <person name="Ravel J."/>
        </authorList>
    </citation>
    <scope>NUCLEOTIDE SEQUENCE [LARGE SCALE GENOMIC DNA]</scope>
    <source>
        <strain>IP 31758</strain>
    </source>
</reference>
<accession>A7FLX9</accession>
<organism>
    <name type="scientific">Yersinia pseudotuberculosis serotype O:1b (strain IP 31758)</name>
    <dbReference type="NCBI Taxonomy" id="349747"/>
    <lineage>
        <taxon>Bacteria</taxon>
        <taxon>Pseudomonadati</taxon>
        <taxon>Pseudomonadota</taxon>
        <taxon>Gammaproteobacteria</taxon>
        <taxon>Enterobacterales</taxon>
        <taxon>Yersiniaceae</taxon>
        <taxon>Yersinia</taxon>
    </lineage>
</organism>
<gene>
    <name evidence="1" type="primary">ftsB</name>
    <name type="ordered locus">YpsIP31758_3300</name>
</gene>